<evidence type="ECO:0000255" key="1">
    <source>
        <dbReference type="HAMAP-Rule" id="MF_00384"/>
    </source>
</evidence>
<evidence type="ECO:0000305" key="2"/>
<protein>
    <recommendedName>
        <fullName evidence="1">Homoserine kinase</fullName>
        <shortName evidence="1">HK</shortName>
        <shortName evidence="1">HSK</shortName>
        <ecNumber evidence="1">2.7.1.39</ecNumber>
    </recommendedName>
</protein>
<feature type="chain" id="PRO_0000156636" description="Homoserine kinase">
    <location>
        <begin position="1"/>
        <end position="309"/>
    </location>
</feature>
<feature type="binding site" evidence="1">
    <location>
        <begin position="91"/>
        <end position="101"/>
    </location>
    <ligand>
        <name>ATP</name>
        <dbReference type="ChEBI" id="CHEBI:30616"/>
    </ligand>
</feature>
<name>KHSE_YERPE</name>
<dbReference type="EC" id="2.7.1.39" evidence="1"/>
<dbReference type="EMBL" id="AL590842">
    <property type="protein sequence ID" value="CAL19139.1"/>
    <property type="molecule type" value="Genomic_DNA"/>
</dbReference>
<dbReference type="EMBL" id="AE009952">
    <property type="protein sequence ID" value="AAM87264.1"/>
    <property type="status" value="ALT_INIT"/>
    <property type="molecule type" value="Genomic_DNA"/>
</dbReference>
<dbReference type="EMBL" id="AE017042">
    <property type="protein sequence ID" value="AAS63870.1"/>
    <property type="status" value="ALT_INIT"/>
    <property type="molecule type" value="Genomic_DNA"/>
</dbReference>
<dbReference type="PIR" id="AI0056">
    <property type="entry name" value="AI0056"/>
</dbReference>
<dbReference type="RefSeq" id="WP_002209238.1">
    <property type="nucleotide sequence ID" value="NZ_WUCM01000002.1"/>
</dbReference>
<dbReference type="RefSeq" id="YP_002345532.1">
    <property type="nucleotide sequence ID" value="NC_003143.1"/>
</dbReference>
<dbReference type="SMR" id="Q8ZIN5"/>
<dbReference type="IntAct" id="Q8ZIN5">
    <property type="interactions" value="1"/>
</dbReference>
<dbReference type="STRING" id="214092.YPO0460"/>
<dbReference type="PaxDb" id="214092-YPO0460"/>
<dbReference type="EnsemblBacteria" id="AAS63870">
    <property type="protein sequence ID" value="AAS63870"/>
    <property type="gene ID" value="YP_3722"/>
</dbReference>
<dbReference type="GeneID" id="96664104"/>
<dbReference type="KEGG" id="ype:YPO0460"/>
<dbReference type="KEGG" id="ypk:y3716"/>
<dbReference type="KEGG" id="ypm:YP_3722"/>
<dbReference type="PATRIC" id="fig|214092.21.peg.706"/>
<dbReference type="eggNOG" id="COG0083">
    <property type="taxonomic scope" value="Bacteria"/>
</dbReference>
<dbReference type="HOGENOM" id="CLU_041243_1_1_6"/>
<dbReference type="OMA" id="CANRIPH"/>
<dbReference type="OrthoDB" id="9769912at2"/>
<dbReference type="UniPathway" id="UPA00050">
    <property type="reaction ID" value="UER00064"/>
</dbReference>
<dbReference type="Proteomes" id="UP000000815">
    <property type="component" value="Chromosome"/>
</dbReference>
<dbReference type="Proteomes" id="UP000001019">
    <property type="component" value="Chromosome"/>
</dbReference>
<dbReference type="Proteomes" id="UP000002490">
    <property type="component" value="Chromosome"/>
</dbReference>
<dbReference type="GO" id="GO:0005737">
    <property type="term" value="C:cytoplasm"/>
    <property type="evidence" value="ECO:0007669"/>
    <property type="project" value="UniProtKB-SubCell"/>
</dbReference>
<dbReference type="GO" id="GO:0005524">
    <property type="term" value="F:ATP binding"/>
    <property type="evidence" value="ECO:0007669"/>
    <property type="project" value="UniProtKB-UniRule"/>
</dbReference>
<dbReference type="GO" id="GO:0004413">
    <property type="term" value="F:homoserine kinase activity"/>
    <property type="evidence" value="ECO:0007669"/>
    <property type="project" value="UniProtKB-UniRule"/>
</dbReference>
<dbReference type="GO" id="GO:0009088">
    <property type="term" value="P:threonine biosynthetic process"/>
    <property type="evidence" value="ECO:0007669"/>
    <property type="project" value="UniProtKB-UniRule"/>
</dbReference>
<dbReference type="FunFam" id="3.30.230.10:FF:000020">
    <property type="entry name" value="Homoserine kinase"/>
    <property type="match status" value="1"/>
</dbReference>
<dbReference type="FunFam" id="3.30.70.890:FF:000002">
    <property type="entry name" value="Homoserine kinase"/>
    <property type="match status" value="1"/>
</dbReference>
<dbReference type="Gene3D" id="3.30.230.10">
    <property type="match status" value="1"/>
</dbReference>
<dbReference type="Gene3D" id="3.30.70.890">
    <property type="entry name" value="GHMP kinase, C-terminal domain"/>
    <property type="match status" value="1"/>
</dbReference>
<dbReference type="HAMAP" id="MF_00384">
    <property type="entry name" value="Homoser_kinase"/>
    <property type="match status" value="1"/>
</dbReference>
<dbReference type="InterPro" id="IPR013750">
    <property type="entry name" value="GHMP_kinase_C_dom"/>
</dbReference>
<dbReference type="InterPro" id="IPR036554">
    <property type="entry name" value="GHMP_kinase_C_sf"/>
</dbReference>
<dbReference type="InterPro" id="IPR006204">
    <property type="entry name" value="GHMP_kinase_N_dom"/>
</dbReference>
<dbReference type="InterPro" id="IPR006203">
    <property type="entry name" value="GHMP_knse_ATP-bd_CS"/>
</dbReference>
<dbReference type="InterPro" id="IPR000870">
    <property type="entry name" value="Homoserine_kinase"/>
</dbReference>
<dbReference type="InterPro" id="IPR020568">
    <property type="entry name" value="Ribosomal_Su5_D2-typ_SF"/>
</dbReference>
<dbReference type="InterPro" id="IPR014721">
    <property type="entry name" value="Ribsml_uS5_D2-typ_fold_subgr"/>
</dbReference>
<dbReference type="NCBIfam" id="NF002288">
    <property type="entry name" value="PRK01212.1-4"/>
    <property type="match status" value="1"/>
</dbReference>
<dbReference type="NCBIfam" id="TIGR00191">
    <property type="entry name" value="thrB"/>
    <property type="match status" value="1"/>
</dbReference>
<dbReference type="PANTHER" id="PTHR20861:SF1">
    <property type="entry name" value="HOMOSERINE KINASE"/>
    <property type="match status" value="1"/>
</dbReference>
<dbReference type="PANTHER" id="PTHR20861">
    <property type="entry name" value="HOMOSERINE/4-DIPHOSPHOCYTIDYL-2-C-METHYL-D-ERYTHRITOL KINASE"/>
    <property type="match status" value="1"/>
</dbReference>
<dbReference type="Pfam" id="PF08544">
    <property type="entry name" value="GHMP_kinases_C"/>
    <property type="match status" value="1"/>
</dbReference>
<dbReference type="Pfam" id="PF00288">
    <property type="entry name" value="GHMP_kinases_N"/>
    <property type="match status" value="1"/>
</dbReference>
<dbReference type="PIRSF" id="PIRSF000676">
    <property type="entry name" value="Homoser_kin"/>
    <property type="match status" value="1"/>
</dbReference>
<dbReference type="PRINTS" id="PR00958">
    <property type="entry name" value="HOMSERKINASE"/>
</dbReference>
<dbReference type="SUPFAM" id="SSF55060">
    <property type="entry name" value="GHMP Kinase, C-terminal domain"/>
    <property type="match status" value="1"/>
</dbReference>
<dbReference type="SUPFAM" id="SSF54211">
    <property type="entry name" value="Ribosomal protein S5 domain 2-like"/>
    <property type="match status" value="1"/>
</dbReference>
<dbReference type="PROSITE" id="PS00627">
    <property type="entry name" value="GHMP_KINASES_ATP"/>
    <property type="match status" value="1"/>
</dbReference>
<organism>
    <name type="scientific">Yersinia pestis</name>
    <dbReference type="NCBI Taxonomy" id="632"/>
    <lineage>
        <taxon>Bacteria</taxon>
        <taxon>Pseudomonadati</taxon>
        <taxon>Pseudomonadota</taxon>
        <taxon>Gammaproteobacteria</taxon>
        <taxon>Enterobacterales</taxon>
        <taxon>Yersiniaceae</taxon>
        <taxon>Yersinia</taxon>
    </lineage>
</organism>
<keyword id="KW-0028">Amino-acid biosynthesis</keyword>
<keyword id="KW-0067">ATP-binding</keyword>
<keyword id="KW-0963">Cytoplasm</keyword>
<keyword id="KW-0418">Kinase</keyword>
<keyword id="KW-0547">Nucleotide-binding</keyword>
<keyword id="KW-1185">Reference proteome</keyword>
<keyword id="KW-0791">Threonine biosynthesis</keyword>
<keyword id="KW-0808">Transferase</keyword>
<sequence>MVKIYAPASIGNVSVGFDVLGAAVSPIDGTLLGDCVSVTAAERFSLHNEGRFVSKLPDDPKQNIVYQCWERFCQEMGKEIPVAMVLEKNMPIGSGLGSSACSVVAGLMAMNEFCGQPLDKVTLLGMMGELEGRVSGSIHFDNVAPCYLGGMQLILEQEGYISQDVPGFSDWLWVMAYPGIKVSTAEARAILPAQYRRQDCITHGRNLAGFIHACHTQQPDLAAKMMKDVIAEPYRTQLLPGFAAARQAAQDIGALACGISGSGPTLFAVCNDQATAQRMAGWLQNHYLQNDEGFVHICRLDTAGARLLG</sequence>
<reference key="1">
    <citation type="journal article" date="2001" name="Nature">
        <title>Genome sequence of Yersinia pestis, the causative agent of plague.</title>
        <authorList>
            <person name="Parkhill J."/>
            <person name="Wren B.W."/>
            <person name="Thomson N.R."/>
            <person name="Titball R.W."/>
            <person name="Holden M.T.G."/>
            <person name="Prentice M.B."/>
            <person name="Sebaihia M."/>
            <person name="James K.D."/>
            <person name="Churcher C.M."/>
            <person name="Mungall K.L."/>
            <person name="Baker S."/>
            <person name="Basham D."/>
            <person name="Bentley S.D."/>
            <person name="Brooks K."/>
            <person name="Cerdeno-Tarraga A.-M."/>
            <person name="Chillingworth T."/>
            <person name="Cronin A."/>
            <person name="Davies R.M."/>
            <person name="Davis P."/>
            <person name="Dougan G."/>
            <person name="Feltwell T."/>
            <person name="Hamlin N."/>
            <person name="Holroyd S."/>
            <person name="Jagels K."/>
            <person name="Karlyshev A.V."/>
            <person name="Leather S."/>
            <person name="Moule S."/>
            <person name="Oyston P.C.F."/>
            <person name="Quail M.A."/>
            <person name="Rutherford K.M."/>
            <person name="Simmonds M."/>
            <person name="Skelton J."/>
            <person name="Stevens K."/>
            <person name="Whitehead S."/>
            <person name="Barrell B.G."/>
        </authorList>
    </citation>
    <scope>NUCLEOTIDE SEQUENCE [LARGE SCALE GENOMIC DNA]</scope>
    <source>
        <strain>CO-92 / Biovar Orientalis</strain>
    </source>
</reference>
<reference key="2">
    <citation type="journal article" date="2002" name="J. Bacteriol.">
        <title>Genome sequence of Yersinia pestis KIM.</title>
        <authorList>
            <person name="Deng W."/>
            <person name="Burland V."/>
            <person name="Plunkett G. III"/>
            <person name="Boutin A."/>
            <person name="Mayhew G.F."/>
            <person name="Liss P."/>
            <person name="Perna N.T."/>
            <person name="Rose D.J."/>
            <person name="Mau B."/>
            <person name="Zhou S."/>
            <person name="Schwartz D.C."/>
            <person name="Fetherston J.D."/>
            <person name="Lindler L.E."/>
            <person name="Brubaker R.R."/>
            <person name="Plano G.V."/>
            <person name="Straley S.C."/>
            <person name="McDonough K.A."/>
            <person name="Nilles M.L."/>
            <person name="Matson J.S."/>
            <person name="Blattner F.R."/>
            <person name="Perry R.D."/>
        </authorList>
    </citation>
    <scope>NUCLEOTIDE SEQUENCE [LARGE SCALE GENOMIC DNA]</scope>
    <source>
        <strain>KIM10+ / Biovar Mediaevalis</strain>
    </source>
</reference>
<reference key="3">
    <citation type="journal article" date="2004" name="DNA Res.">
        <title>Complete genome sequence of Yersinia pestis strain 91001, an isolate avirulent to humans.</title>
        <authorList>
            <person name="Song Y."/>
            <person name="Tong Z."/>
            <person name="Wang J."/>
            <person name="Wang L."/>
            <person name="Guo Z."/>
            <person name="Han Y."/>
            <person name="Zhang J."/>
            <person name="Pei D."/>
            <person name="Zhou D."/>
            <person name="Qin H."/>
            <person name="Pang X."/>
            <person name="Han Y."/>
            <person name="Zhai J."/>
            <person name="Li M."/>
            <person name="Cui B."/>
            <person name="Qi Z."/>
            <person name="Jin L."/>
            <person name="Dai R."/>
            <person name="Chen F."/>
            <person name="Li S."/>
            <person name="Ye C."/>
            <person name="Du Z."/>
            <person name="Lin W."/>
            <person name="Wang J."/>
            <person name="Yu J."/>
            <person name="Yang H."/>
            <person name="Wang J."/>
            <person name="Huang P."/>
            <person name="Yang R."/>
        </authorList>
    </citation>
    <scope>NUCLEOTIDE SEQUENCE [LARGE SCALE GENOMIC DNA]</scope>
    <source>
        <strain>91001 / Biovar Mediaevalis</strain>
    </source>
</reference>
<proteinExistence type="inferred from homology"/>
<gene>
    <name evidence="1" type="primary">thrB</name>
    <name type="ordered locus">YPO0460</name>
    <name type="ordered locus">y3716</name>
    <name type="ordered locus">YP_3722</name>
</gene>
<accession>Q8ZIN5</accession>
<accession>Q0WJK6</accession>
<comment type="function">
    <text evidence="1">Catalyzes the ATP-dependent phosphorylation of L-homoserine to L-homoserine phosphate.</text>
</comment>
<comment type="catalytic activity">
    <reaction evidence="1">
        <text>L-homoserine + ATP = O-phospho-L-homoserine + ADP + H(+)</text>
        <dbReference type="Rhea" id="RHEA:13985"/>
        <dbReference type="ChEBI" id="CHEBI:15378"/>
        <dbReference type="ChEBI" id="CHEBI:30616"/>
        <dbReference type="ChEBI" id="CHEBI:57476"/>
        <dbReference type="ChEBI" id="CHEBI:57590"/>
        <dbReference type="ChEBI" id="CHEBI:456216"/>
        <dbReference type="EC" id="2.7.1.39"/>
    </reaction>
</comment>
<comment type="pathway">
    <text evidence="1">Amino-acid biosynthesis; L-threonine biosynthesis; L-threonine from L-aspartate: step 4/5.</text>
</comment>
<comment type="subcellular location">
    <subcellularLocation>
        <location evidence="1">Cytoplasm</location>
    </subcellularLocation>
</comment>
<comment type="similarity">
    <text evidence="1">Belongs to the GHMP kinase family. Homoserine kinase subfamily.</text>
</comment>
<comment type="sequence caution" evidence="2">
    <conflict type="erroneous initiation">
        <sequence resource="EMBL-CDS" id="AAM87264"/>
    </conflict>
</comment>
<comment type="sequence caution" evidence="2">
    <conflict type="erroneous initiation">
        <sequence resource="EMBL-CDS" id="AAS63870"/>
    </conflict>
</comment>